<feature type="chain" id="PRO_0000213114" description="D-alanyl carrier protein">
    <location>
        <begin position="1"/>
        <end position="79"/>
    </location>
</feature>
<feature type="domain" description="Carrier" evidence="1">
    <location>
        <begin position="1"/>
        <end position="77"/>
    </location>
</feature>
<feature type="modified residue" description="O-(pantetheine 4'-phosphoryl)serine" evidence="1">
    <location>
        <position position="35"/>
    </location>
</feature>
<reference key="1">
    <citation type="journal article" date="2001" name="Proc. Natl. Acad. Sci. U.S.A.">
        <title>Complete genome sequence of an M1 strain of Streptococcus pyogenes.</title>
        <authorList>
            <person name="Ferretti J.J."/>
            <person name="McShan W.M."/>
            <person name="Ajdic D.J."/>
            <person name="Savic D.J."/>
            <person name="Savic G."/>
            <person name="Lyon K."/>
            <person name="Primeaux C."/>
            <person name="Sezate S."/>
            <person name="Suvorov A.N."/>
            <person name="Kenton S."/>
            <person name="Lai H.S."/>
            <person name="Lin S.P."/>
            <person name="Qian Y."/>
            <person name="Jia H.G."/>
            <person name="Najar F.Z."/>
            <person name="Ren Q."/>
            <person name="Zhu H."/>
            <person name="Song L."/>
            <person name="White J."/>
            <person name="Yuan X."/>
            <person name="Clifton S.W."/>
            <person name="Roe B.A."/>
            <person name="McLaughlin R.E."/>
        </authorList>
    </citation>
    <scope>NUCLEOTIDE SEQUENCE [LARGE SCALE GENOMIC DNA]</scope>
    <source>
        <strain>ATCC 700294 / SF370 / Serotype M1</strain>
    </source>
</reference>
<reference key="2">
    <citation type="journal article" date="2005" name="J. Infect. Dis.">
        <title>Evolutionary origin and emergence of a highly successful clone of serotype M1 group A Streptococcus involved multiple horizontal gene transfer events.</title>
        <authorList>
            <person name="Sumby P."/>
            <person name="Porcella S.F."/>
            <person name="Madrigal A.G."/>
            <person name="Barbian K.D."/>
            <person name="Virtaneva K."/>
            <person name="Ricklefs S.M."/>
            <person name="Sturdevant D.E."/>
            <person name="Graham M.R."/>
            <person name="Vuopio-Varkila J."/>
            <person name="Hoe N.P."/>
            <person name="Musser J.M."/>
        </authorList>
    </citation>
    <scope>NUCLEOTIDE SEQUENCE [LARGE SCALE GENOMIC DNA]</scope>
    <source>
        <strain>ATCC BAA-947 / MGAS5005 / Serotype M1</strain>
    </source>
</reference>
<name>DLTC_STRP1</name>
<organism>
    <name type="scientific">Streptococcus pyogenes serotype M1</name>
    <dbReference type="NCBI Taxonomy" id="301447"/>
    <lineage>
        <taxon>Bacteria</taxon>
        <taxon>Bacillati</taxon>
        <taxon>Bacillota</taxon>
        <taxon>Bacilli</taxon>
        <taxon>Lactobacillales</taxon>
        <taxon>Streptococcaceae</taxon>
        <taxon>Streptococcus</taxon>
    </lineage>
</organism>
<keyword id="KW-0961">Cell wall biogenesis/degradation</keyword>
<keyword id="KW-0963">Cytoplasm</keyword>
<keyword id="KW-0596">Phosphopantetheine</keyword>
<keyword id="KW-0597">Phosphoprotein</keyword>
<keyword id="KW-1185">Reference proteome</keyword>
<proteinExistence type="inferred from homology"/>
<evidence type="ECO:0000255" key="1">
    <source>
        <dbReference type="HAMAP-Rule" id="MF_00565"/>
    </source>
</evidence>
<gene>
    <name evidence="1" type="primary">dltC</name>
    <name type="ordered locus">SPy_1310</name>
    <name type="ordered locus">M5005_Spy1071</name>
</gene>
<dbReference type="EMBL" id="AE004092">
    <property type="protein sequence ID" value="AAK34154.1"/>
    <property type="molecule type" value="Genomic_DNA"/>
</dbReference>
<dbReference type="EMBL" id="CP000017">
    <property type="protein sequence ID" value="AAZ51689.1"/>
    <property type="molecule type" value="Genomic_DNA"/>
</dbReference>
<dbReference type="RefSeq" id="NP_269433.1">
    <property type="nucleotide sequence ID" value="NC_002737.2"/>
</dbReference>
<dbReference type="SMR" id="P63959"/>
<dbReference type="PaxDb" id="1314-HKU360_01050"/>
<dbReference type="KEGG" id="spy:SPy_1310"/>
<dbReference type="KEGG" id="spz:M5005_Spy1071"/>
<dbReference type="PATRIC" id="fig|160490.10.peg.1147"/>
<dbReference type="HOGENOM" id="CLU_108696_19_0_9"/>
<dbReference type="OMA" id="ISDQMDD"/>
<dbReference type="UniPathway" id="UPA00556"/>
<dbReference type="Proteomes" id="UP000000750">
    <property type="component" value="Chromosome"/>
</dbReference>
<dbReference type="GO" id="GO:0005737">
    <property type="term" value="C:cytoplasm"/>
    <property type="evidence" value="ECO:0007669"/>
    <property type="project" value="UniProtKB-SubCell"/>
</dbReference>
<dbReference type="GO" id="GO:0036370">
    <property type="term" value="F:D-alanyl carrier activity"/>
    <property type="evidence" value="ECO:0007669"/>
    <property type="project" value="UniProtKB-UniRule"/>
</dbReference>
<dbReference type="GO" id="GO:0071555">
    <property type="term" value="P:cell wall organization"/>
    <property type="evidence" value="ECO:0007669"/>
    <property type="project" value="UniProtKB-KW"/>
</dbReference>
<dbReference type="GO" id="GO:0070395">
    <property type="term" value="P:lipoteichoic acid biosynthetic process"/>
    <property type="evidence" value="ECO:0007669"/>
    <property type="project" value="UniProtKB-UniRule"/>
</dbReference>
<dbReference type="Gene3D" id="1.10.1200.10">
    <property type="entry name" value="ACP-like"/>
    <property type="match status" value="1"/>
</dbReference>
<dbReference type="HAMAP" id="MF_00565">
    <property type="entry name" value="DltC"/>
    <property type="match status" value="1"/>
</dbReference>
<dbReference type="InterPro" id="IPR036736">
    <property type="entry name" value="ACP-like_sf"/>
</dbReference>
<dbReference type="InterPro" id="IPR003230">
    <property type="entry name" value="DltC"/>
</dbReference>
<dbReference type="InterPro" id="IPR009081">
    <property type="entry name" value="PP-bd_ACP"/>
</dbReference>
<dbReference type="NCBIfam" id="TIGR01688">
    <property type="entry name" value="dltC"/>
    <property type="match status" value="1"/>
</dbReference>
<dbReference type="NCBIfam" id="NF003464">
    <property type="entry name" value="PRK05087.1"/>
    <property type="match status" value="1"/>
</dbReference>
<dbReference type="Pfam" id="PF00550">
    <property type="entry name" value="PP-binding"/>
    <property type="match status" value="1"/>
</dbReference>
<dbReference type="SUPFAM" id="SSF47336">
    <property type="entry name" value="ACP-like"/>
    <property type="match status" value="1"/>
</dbReference>
<dbReference type="PROSITE" id="PS50075">
    <property type="entry name" value="CARRIER"/>
    <property type="match status" value="1"/>
</dbReference>
<protein>
    <recommendedName>
        <fullName evidence="1">D-alanyl carrier protein</fullName>
        <shortName evidence="1">DCP</shortName>
    </recommendedName>
    <alternativeName>
        <fullName evidence="1">D-alanine--poly(phosphoribitol) ligase subunit 2</fullName>
    </alternativeName>
</protein>
<comment type="function">
    <text evidence="1">Carrier protein involved in the D-alanylation of lipoteichoic acid (LTA). The loading of thioester-linked D-alanine onto DltC is catalyzed by D-alanine--D-alanyl carrier protein ligase DltA. The DltC-carried D-alanyl group is further transferred to cell membrane phosphatidylglycerol (PG) by forming an ester bond, probably catalyzed by DltD. D-alanylation of LTA plays an important role in modulating the properties of the cell wall in Gram-positive bacteria, influencing the net charge of the cell wall.</text>
</comment>
<comment type="pathway">
    <text evidence="1">Cell wall biogenesis; lipoteichoic acid biosynthesis.</text>
</comment>
<comment type="subcellular location">
    <subcellularLocation>
        <location evidence="1">Cytoplasm</location>
    </subcellularLocation>
</comment>
<comment type="PTM">
    <text evidence="1">4'-phosphopantetheine is transferred from CoA to a specific serine of apo-DCP.</text>
</comment>
<comment type="similarity">
    <text evidence="1">Belongs to the DltC family.</text>
</comment>
<sequence>MSIEETVIELFDRLFMEDVSEMMDEDLFDAGVLDSLGTVELIVELESTFNIKVPISEFGRDDWNTVTKIVQGVEELQHA</sequence>
<accession>P63959</accession>
<accession>Q48Y83</accession>
<accession>Q99ZA8</accession>